<reference key="1">
    <citation type="journal article" date="2004" name="Nat. Genet.">
        <title>Complete sequencing and characterization of 21,243 full-length human cDNAs.</title>
        <authorList>
            <person name="Ota T."/>
            <person name="Suzuki Y."/>
            <person name="Nishikawa T."/>
            <person name="Otsuki T."/>
            <person name="Sugiyama T."/>
            <person name="Irie R."/>
            <person name="Wakamatsu A."/>
            <person name="Hayashi K."/>
            <person name="Sato H."/>
            <person name="Nagai K."/>
            <person name="Kimura K."/>
            <person name="Makita H."/>
            <person name="Sekine M."/>
            <person name="Obayashi M."/>
            <person name="Nishi T."/>
            <person name="Shibahara T."/>
            <person name="Tanaka T."/>
            <person name="Ishii S."/>
            <person name="Yamamoto J."/>
            <person name="Saito K."/>
            <person name="Kawai Y."/>
            <person name="Isono Y."/>
            <person name="Nakamura Y."/>
            <person name="Nagahari K."/>
            <person name="Murakami K."/>
            <person name="Yasuda T."/>
            <person name="Iwayanagi T."/>
            <person name="Wagatsuma M."/>
            <person name="Shiratori A."/>
            <person name="Sudo H."/>
            <person name="Hosoiri T."/>
            <person name="Kaku Y."/>
            <person name="Kodaira H."/>
            <person name="Kondo H."/>
            <person name="Sugawara M."/>
            <person name="Takahashi M."/>
            <person name="Kanda K."/>
            <person name="Yokoi T."/>
            <person name="Furuya T."/>
            <person name="Kikkawa E."/>
            <person name="Omura Y."/>
            <person name="Abe K."/>
            <person name="Kamihara K."/>
            <person name="Katsuta N."/>
            <person name="Sato K."/>
            <person name="Tanikawa M."/>
            <person name="Yamazaki M."/>
            <person name="Ninomiya K."/>
            <person name="Ishibashi T."/>
            <person name="Yamashita H."/>
            <person name="Murakawa K."/>
            <person name="Fujimori K."/>
            <person name="Tanai H."/>
            <person name="Kimata M."/>
            <person name="Watanabe M."/>
            <person name="Hiraoka S."/>
            <person name="Chiba Y."/>
            <person name="Ishida S."/>
            <person name="Ono Y."/>
            <person name="Takiguchi S."/>
            <person name="Watanabe S."/>
            <person name="Yosida M."/>
            <person name="Hotuta T."/>
            <person name="Kusano J."/>
            <person name="Kanehori K."/>
            <person name="Takahashi-Fujii A."/>
            <person name="Hara H."/>
            <person name="Tanase T.-O."/>
            <person name="Nomura Y."/>
            <person name="Togiya S."/>
            <person name="Komai F."/>
            <person name="Hara R."/>
            <person name="Takeuchi K."/>
            <person name="Arita M."/>
            <person name="Imose N."/>
            <person name="Musashino K."/>
            <person name="Yuuki H."/>
            <person name="Oshima A."/>
            <person name="Sasaki N."/>
            <person name="Aotsuka S."/>
            <person name="Yoshikawa Y."/>
            <person name="Matsunawa H."/>
            <person name="Ichihara T."/>
            <person name="Shiohata N."/>
            <person name="Sano S."/>
            <person name="Moriya S."/>
            <person name="Momiyama H."/>
            <person name="Satoh N."/>
            <person name="Takami S."/>
            <person name="Terashima Y."/>
            <person name="Suzuki O."/>
            <person name="Nakagawa S."/>
            <person name="Senoh A."/>
            <person name="Mizoguchi H."/>
            <person name="Goto Y."/>
            <person name="Shimizu F."/>
            <person name="Wakebe H."/>
            <person name="Hishigaki H."/>
            <person name="Watanabe T."/>
            <person name="Sugiyama A."/>
            <person name="Takemoto M."/>
            <person name="Kawakami B."/>
            <person name="Yamazaki M."/>
            <person name="Watanabe K."/>
            <person name="Kumagai A."/>
            <person name="Itakura S."/>
            <person name="Fukuzumi Y."/>
            <person name="Fujimori Y."/>
            <person name="Komiyama M."/>
            <person name="Tashiro H."/>
            <person name="Tanigami A."/>
            <person name="Fujiwara T."/>
            <person name="Ono T."/>
            <person name="Yamada K."/>
            <person name="Fujii Y."/>
            <person name="Ozaki K."/>
            <person name="Hirao M."/>
            <person name="Ohmori Y."/>
            <person name="Kawabata A."/>
            <person name="Hikiji T."/>
            <person name="Kobatake N."/>
            <person name="Inagaki H."/>
            <person name="Ikema Y."/>
            <person name="Okamoto S."/>
            <person name="Okitani R."/>
            <person name="Kawakami T."/>
            <person name="Noguchi S."/>
            <person name="Itoh T."/>
            <person name="Shigeta K."/>
            <person name="Senba T."/>
            <person name="Matsumura K."/>
            <person name="Nakajima Y."/>
            <person name="Mizuno T."/>
            <person name="Morinaga M."/>
            <person name="Sasaki M."/>
            <person name="Togashi T."/>
            <person name="Oyama M."/>
            <person name="Hata H."/>
            <person name="Watanabe M."/>
            <person name="Komatsu T."/>
            <person name="Mizushima-Sugano J."/>
            <person name="Satoh T."/>
            <person name="Shirai Y."/>
            <person name="Takahashi Y."/>
            <person name="Nakagawa K."/>
            <person name="Okumura K."/>
            <person name="Nagase T."/>
            <person name="Nomura N."/>
            <person name="Kikuchi H."/>
            <person name="Masuho Y."/>
            <person name="Yamashita R."/>
            <person name="Nakai K."/>
            <person name="Yada T."/>
            <person name="Nakamura Y."/>
            <person name="Ohara O."/>
            <person name="Isogai T."/>
            <person name="Sugano S."/>
        </authorList>
    </citation>
    <scope>NUCLEOTIDE SEQUENCE [LARGE SCALE MRNA] (ISOFORM 1)</scope>
    <scope>VARIANT ARG-293</scope>
</reference>
<reference key="2">
    <citation type="journal article" date="2006" name="Nature">
        <title>DNA sequence of human chromosome 17 and analysis of rearrangement in the human lineage.</title>
        <authorList>
            <person name="Zody M.C."/>
            <person name="Garber M."/>
            <person name="Adams D.J."/>
            <person name="Sharpe T."/>
            <person name="Harrow J."/>
            <person name="Lupski J.R."/>
            <person name="Nicholson C."/>
            <person name="Searle S.M."/>
            <person name="Wilming L."/>
            <person name="Young S.K."/>
            <person name="Abouelleil A."/>
            <person name="Allen N.R."/>
            <person name="Bi W."/>
            <person name="Bloom T."/>
            <person name="Borowsky M.L."/>
            <person name="Bugalter B.E."/>
            <person name="Butler J."/>
            <person name="Chang J.L."/>
            <person name="Chen C.-K."/>
            <person name="Cook A."/>
            <person name="Corum B."/>
            <person name="Cuomo C.A."/>
            <person name="de Jong P.J."/>
            <person name="DeCaprio D."/>
            <person name="Dewar K."/>
            <person name="FitzGerald M."/>
            <person name="Gilbert J."/>
            <person name="Gibson R."/>
            <person name="Gnerre S."/>
            <person name="Goldstein S."/>
            <person name="Grafham D.V."/>
            <person name="Grocock R."/>
            <person name="Hafez N."/>
            <person name="Hagopian D.S."/>
            <person name="Hart E."/>
            <person name="Norman C.H."/>
            <person name="Humphray S."/>
            <person name="Jaffe D.B."/>
            <person name="Jones M."/>
            <person name="Kamal M."/>
            <person name="Khodiyar V.K."/>
            <person name="LaButti K."/>
            <person name="Laird G."/>
            <person name="Lehoczky J."/>
            <person name="Liu X."/>
            <person name="Lokyitsang T."/>
            <person name="Loveland J."/>
            <person name="Lui A."/>
            <person name="Macdonald P."/>
            <person name="Major J.E."/>
            <person name="Matthews L."/>
            <person name="Mauceli E."/>
            <person name="McCarroll S.A."/>
            <person name="Mihalev A.H."/>
            <person name="Mudge J."/>
            <person name="Nguyen C."/>
            <person name="Nicol R."/>
            <person name="O'Leary S.B."/>
            <person name="Osoegawa K."/>
            <person name="Schwartz D.C."/>
            <person name="Shaw-Smith C."/>
            <person name="Stankiewicz P."/>
            <person name="Steward C."/>
            <person name="Swarbreck D."/>
            <person name="Venkataraman V."/>
            <person name="Whittaker C.A."/>
            <person name="Yang X."/>
            <person name="Zimmer A.R."/>
            <person name="Bradley A."/>
            <person name="Hubbard T."/>
            <person name="Birren B.W."/>
            <person name="Rogers J."/>
            <person name="Lander E.S."/>
            <person name="Nusbaum C."/>
        </authorList>
    </citation>
    <scope>NUCLEOTIDE SEQUENCE [LARGE SCALE GENOMIC DNA]</scope>
</reference>
<reference key="3">
    <citation type="journal article" date="2004" name="Genome Res.">
        <title>The status, quality, and expansion of the NIH full-length cDNA project: the Mammalian Gene Collection (MGC).</title>
        <authorList>
            <consortium name="The MGC Project Team"/>
        </authorList>
    </citation>
    <scope>NUCLEOTIDE SEQUENCE [LARGE SCALE MRNA] (ISOFORM 2)</scope>
    <scope>VARIANT SER-330</scope>
    <source>
        <tissue>Lymph</tissue>
    </source>
</reference>
<reference key="4">
    <citation type="journal article" date="2007" name="Genomics">
        <title>Identification of six putative human transporters with structural similarity to the drug transporter SLC22 family.</title>
        <authorList>
            <person name="Jacobsson J.A."/>
            <person name="Haitina T."/>
            <person name="Lindblom J."/>
            <person name="Fredriksson R."/>
        </authorList>
    </citation>
    <scope>IDENTIFICATION</scope>
</reference>
<reference key="5">
    <citation type="journal article" date="2006" name="Science">
        <title>The consensus coding sequences of human breast and colorectal cancers.</title>
        <authorList>
            <person name="Sjoeblom T."/>
            <person name="Jones S."/>
            <person name="Wood L.D."/>
            <person name="Parsons D.W."/>
            <person name="Lin J."/>
            <person name="Barber T.D."/>
            <person name="Mandelker D."/>
            <person name="Leary R.J."/>
            <person name="Ptak J."/>
            <person name="Silliman N."/>
            <person name="Szabo S."/>
            <person name="Buckhaults P."/>
            <person name="Farrell C."/>
            <person name="Meeh P."/>
            <person name="Markowitz S.D."/>
            <person name="Willis J."/>
            <person name="Dawson D."/>
            <person name="Willson J.K.V."/>
            <person name="Gazdar A.F."/>
            <person name="Hartigan J."/>
            <person name="Wu L."/>
            <person name="Liu C."/>
            <person name="Parmigiani G."/>
            <person name="Park B.H."/>
            <person name="Bachman K.E."/>
            <person name="Papadopoulos N."/>
            <person name="Vogelstein B."/>
            <person name="Kinzler K.W."/>
            <person name="Velculescu V.E."/>
        </authorList>
    </citation>
    <scope>VARIANT [LARGE SCALE ANALYSIS] THR-507</scope>
</reference>
<name>SPNS3_HUMAN</name>
<feature type="chain" id="PRO_0000305046" description="Protein spinster homolog 3">
    <location>
        <begin position="1"/>
        <end position="512"/>
    </location>
</feature>
<feature type="transmembrane region" description="Helical" evidence="2">
    <location>
        <begin position="50"/>
        <end position="70"/>
    </location>
</feature>
<feature type="transmembrane region" description="Helical" evidence="2">
    <location>
        <begin position="84"/>
        <end position="104"/>
    </location>
</feature>
<feature type="transmembrane region" description="Helical" evidence="2">
    <location>
        <begin position="112"/>
        <end position="132"/>
    </location>
</feature>
<feature type="transmembrane region" description="Helical" evidence="2">
    <location>
        <begin position="145"/>
        <end position="165"/>
    </location>
</feature>
<feature type="transmembrane region" description="Helical" evidence="2">
    <location>
        <begin position="173"/>
        <end position="193"/>
    </location>
</feature>
<feature type="transmembrane region" description="Helical" evidence="2">
    <location>
        <begin position="204"/>
        <end position="224"/>
    </location>
</feature>
<feature type="transmembrane region" description="Helical" evidence="2">
    <location>
        <begin position="260"/>
        <end position="280"/>
    </location>
</feature>
<feature type="transmembrane region" description="Helical" evidence="2">
    <location>
        <begin position="309"/>
        <end position="329"/>
    </location>
</feature>
<feature type="transmembrane region" description="Helical" evidence="2">
    <location>
        <begin position="343"/>
        <end position="365"/>
    </location>
</feature>
<feature type="transmembrane region" description="Helical" evidence="2">
    <location>
        <begin position="377"/>
        <end position="397"/>
    </location>
</feature>
<feature type="transmembrane region" description="Helical" evidence="2">
    <location>
        <begin position="411"/>
        <end position="431"/>
    </location>
</feature>
<feature type="transmembrane region" description="Helical" evidence="2">
    <location>
        <begin position="450"/>
        <end position="470"/>
    </location>
</feature>
<feature type="region of interest" description="Disordered" evidence="3">
    <location>
        <begin position="1"/>
        <end position="30"/>
    </location>
</feature>
<feature type="region of interest" description="Disordered" evidence="3">
    <location>
        <begin position="481"/>
        <end position="512"/>
    </location>
</feature>
<feature type="splice variant" id="VSP_028197" description="In isoform 2." evidence="7">
    <location>
        <begin position="1"/>
        <end position="127"/>
    </location>
</feature>
<feature type="splice variant" id="VSP_028198" description="In isoform 2." evidence="7">
    <original>SSFISPR</original>
    <variation>MLVCFRL</variation>
    <location>
        <begin position="128"/>
        <end position="134"/>
    </location>
</feature>
<feature type="sequence variant" id="VAR_035158" description="In dbSNP:rs34457931." evidence="4">
    <original>G</original>
    <variation>R</variation>
    <location>
        <position position="293"/>
    </location>
</feature>
<feature type="sequence variant" id="VAR_035159" description="In dbSNP:rs11655342." evidence="5">
    <original>A</original>
    <variation>S</variation>
    <location>
        <position position="330"/>
    </location>
</feature>
<feature type="sequence variant" id="VAR_035968" description="In a colorectal cancer sample; somatic mutation; dbSNP:rs368604785." evidence="6">
    <original>A</original>
    <variation>T</variation>
    <location>
        <position position="507"/>
    </location>
</feature>
<feature type="sequence conflict" description="In Ref. 1; BAD18797." evidence="8" ref="1">
    <original>D</original>
    <variation>G</variation>
    <location>
        <position position="417"/>
    </location>
</feature>
<organism>
    <name type="scientific">Homo sapiens</name>
    <name type="common">Human</name>
    <dbReference type="NCBI Taxonomy" id="9606"/>
    <lineage>
        <taxon>Eukaryota</taxon>
        <taxon>Metazoa</taxon>
        <taxon>Chordata</taxon>
        <taxon>Craniata</taxon>
        <taxon>Vertebrata</taxon>
        <taxon>Euteleostomi</taxon>
        <taxon>Mammalia</taxon>
        <taxon>Eutheria</taxon>
        <taxon>Euarchontoglires</taxon>
        <taxon>Primates</taxon>
        <taxon>Haplorrhini</taxon>
        <taxon>Catarrhini</taxon>
        <taxon>Hominidae</taxon>
        <taxon>Homo</taxon>
    </lineage>
</organism>
<dbReference type="EMBL" id="AK172832">
    <property type="protein sequence ID" value="BAD18797.1"/>
    <property type="molecule type" value="mRNA"/>
</dbReference>
<dbReference type="EMBL" id="AC116910">
    <property type="status" value="NOT_ANNOTATED_CDS"/>
    <property type="molecule type" value="Genomic_DNA"/>
</dbReference>
<dbReference type="EMBL" id="AC127521">
    <property type="status" value="NOT_ANNOTATED_CDS"/>
    <property type="molecule type" value="Genomic_DNA"/>
</dbReference>
<dbReference type="EMBL" id="BC023646">
    <property type="protein sequence ID" value="AAH23646.1"/>
    <property type="molecule type" value="mRNA"/>
</dbReference>
<dbReference type="CCDS" id="CCDS11045.1">
    <molecule id="Q6ZMD2-1"/>
</dbReference>
<dbReference type="RefSeq" id="NP_001307378.1">
    <molecule id="Q6ZMD2-2"/>
    <property type="nucleotide sequence ID" value="NM_001320449.2"/>
</dbReference>
<dbReference type="RefSeq" id="NP_872344.3">
    <molecule id="Q6ZMD2-1"/>
    <property type="nucleotide sequence ID" value="NM_182538.4"/>
</dbReference>
<dbReference type="SMR" id="Q6ZMD2"/>
<dbReference type="BioGRID" id="128385">
    <property type="interactions" value="23"/>
</dbReference>
<dbReference type="FunCoup" id="Q6ZMD2">
    <property type="interactions" value="134"/>
</dbReference>
<dbReference type="IntAct" id="Q6ZMD2">
    <property type="interactions" value="20"/>
</dbReference>
<dbReference type="STRING" id="9606.ENSP00000347721"/>
<dbReference type="TCDB" id="2.A.1.49.12">
    <property type="family name" value="the major facilitator superfamily (mfs)"/>
</dbReference>
<dbReference type="GlyGen" id="Q6ZMD2">
    <property type="glycosylation" value="1 site"/>
</dbReference>
<dbReference type="iPTMnet" id="Q6ZMD2"/>
<dbReference type="PhosphoSitePlus" id="Q6ZMD2"/>
<dbReference type="BioMuta" id="SPNS3"/>
<dbReference type="DMDM" id="296452841"/>
<dbReference type="MassIVE" id="Q6ZMD2"/>
<dbReference type="PaxDb" id="9606-ENSP00000347721"/>
<dbReference type="PeptideAtlas" id="Q6ZMD2"/>
<dbReference type="ProteomicsDB" id="67865">
    <molecule id="Q6ZMD2-1"/>
</dbReference>
<dbReference type="ProteomicsDB" id="67866">
    <molecule id="Q6ZMD2-2"/>
</dbReference>
<dbReference type="Antibodypedia" id="11205">
    <property type="antibodies" value="63 antibodies from 13 providers"/>
</dbReference>
<dbReference type="DNASU" id="201305"/>
<dbReference type="Ensembl" id="ENST00000355530.7">
    <molecule id="Q6ZMD2-1"/>
    <property type="protein sequence ID" value="ENSP00000347721.2"/>
    <property type="gene ID" value="ENSG00000182557.9"/>
</dbReference>
<dbReference type="GeneID" id="201305"/>
<dbReference type="KEGG" id="hsa:201305"/>
<dbReference type="MANE-Select" id="ENST00000355530.7">
    <property type="protein sequence ID" value="ENSP00000347721.2"/>
    <property type="RefSeq nucleotide sequence ID" value="NM_182538.5"/>
    <property type="RefSeq protein sequence ID" value="NP_872344.3"/>
</dbReference>
<dbReference type="UCSC" id="uc002fxt.4">
    <molecule id="Q6ZMD2-1"/>
    <property type="organism name" value="human"/>
</dbReference>
<dbReference type="AGR" id="HGNC:28433"/>
<dbReference type="CTD" id="201305"/>
<dbReference type="DisGeNET" id="201305"/>
<dbReference type="GeneCards" id="SPNS3"/>
<dbReference type="HGNC" id="HGNC:28433">
    <property type="gene designation" value="SPNS3"/>
</dbReference>
<dbReference type="HPA" id="ENSG00000182557">
    <property type="expression patterns" value="Tissue enriched (bone)"/>
</dbReference>
<dbReference type="MIM" id="611701">
    <property type="type" value="gene"/>
</dbReference>
<dbReference type="neXtProt" id="NX_Q6ZMD2"/>
<dbReference type="OpenTargets" id="ENSG00000182557"/>
<dbReference type="PharmGKB" id="PA162404621"/>
<dbReference type="VEuPathDB" id="HostDB:ENSG00000182557"/>
<dbReference type="eggNOG" id="KOG1330">
    <property type="taxonomic scope" value="Eukaryota"/>
</dbReference>
<dbReference type="GeneTree" id="ENSGT00390000005976"/>
<dbReference type="HOGENOM" id="CLU_001265_5_12_1"/>
<dbReference type="InParanoid" id="Q6ZMD2"/>
<dbReference type="OMA" id="YTCVYTA"/>
<dbReference type="OrthoDB" id="6770063at2759"/>
<dbReference type="PAN-GO" id="Q6ZMD2">
    <property type="GO annotations" value="2 GO annotations based on evolutionary models"/>
</dbReference>
<dbReference type="PhylomeDB" id="Q6ZMD2"/>
<dbReference type="TreeFam" id="TF314395"/>
<dbReference type="PathwayCommons" id="Q6ZMD2"/>
<dbReference type="SignaLink" id="Q6ZMD2"/>
<dbReference type="BioGRID-ORCS" id="201305">
    <property type="hits" value="11 hits in 1144 CRISPR screens"/>
</dbReference>
<dbReference type="GenomeRNAi" id="201305"/>
<dbReference type="Pharos" id="Q6ZMD2">
    <property type="development level" value="Tdark"/>
</dbReference>
<dbReference type="PRO" id="PR:Q6ZMD2"/>
<dbReference type="Proteomes" id="UP000005640">
    <property type="component" value="Chromosome 17"/>
</dbReference>
<dbReference type="RNAct" id="Q6ZMD2">
    <property type="molecule type" value="protein"/>
</dbReference>
<dbReference type="Bgee" id="ENSG00000182557">
    <property type="expression patterns" value="Expressed in male germ line stem cell (sensu Vertebrata) in testis and 107 other cell types or tissues"/>
</dbReference>
<dbReference type="ExpressionAtlas" id="Q6ZMD2">
    <property type="expression patterns" value="baseline and differential"/>
</dbReference>
<dbReference type="GO" id="GO:0016020">
    <property type="term" value="C:membrane"/>
    <property type="evidence" value="ECO:0000318"/>
    <property type="project" value="GO_Central"/>
</dbReference>
<dbReference type="GO" id="GO:0022857">
    <property type="term" value="F:transmembrane transporter activity"/>
    <property type="evidence" value="ECO:0000318"/>
    <property type="project" value="GO_Central"/>
</dbReference>
<dbReference type="GO" id="GO:0006869">
    <property type="term" value="P:lipid transport"/>
    <property type="evidence" value="ECO:0007669"/>
    <property type="project" value="UniProtKB-KW"/>
</dbReference>
<dbReference type="CDD" id="cd17328">
    <property type="entry name" value="MFS_spinster_like"/>
    <property type="match status" value="1"/>
</dbReference>
<dbReference type="Gene3D" id="1.20.1250.20">
    <property type="entry name" value="MFS general substrate transporter like domains"/>
    <property type="match status" value="1"/>
</dbReference>
<dbReference type="InterPro" id="IPR011701">
    <property type="entry name" value="MFS"/>
</dbReference>
<dbReference type="InterPro" id="IPR020846">
    <property type="entry name" value="MFS_dom"/>
</dbReference>
<dbReference type="InterPro" id="IPR044770">
    <property type="entry name" value="MFS_spinster-like"/>
</dbReference>
<dbReference type="InterPro" id="IPR036259">
    <property type="entry name" value="MFS_trans_sf"/>
</dbReference>
<dbReference type="PANTHER" id="PTHR23505:SF3">
    <property type="entry name" value="PROTEIN SPINSTER HOMOLOG 3"/>
    <property type="match status" value="1"/>
</dbReference>
<dbReference type="PANTHER" id="PTHR23505">
    <property type="entry name" value="SPINSTER"/>
    <property type="match status" value="1"/>
</dbReference>
<dbReference type="Pfam" id="PF07690">
    <property type="entry name" value="MFS_1"/>
    <property type="match status" value="1"/>
</dbReference>
<dbReference type="SUPFAM" id="SSF103473">
    <property type="entry name" value="MFS general substrate transporter"/>
    <property type="match status" value="1"/>
</dbReference>
<dbReference type="PROSITE" id="PS50850">
    <property type="entry name" value="MFS"/>
    <property type="match status" value="1"/>
</dbReference>
<proteinExistence type="evidence at protein level"/>
<accession>Q6ZMD2</accession>
<accession>Q8IZ31</accession>
<keyword id="KW-0025">Alternative splicing</keyword>
<keyword id="KW-0445">Lipid transport</keyword>
<keyword id="KW-0472">Membrane</keyword>
<keyword id="KW-1267">Proteomics identification</keyword>
<keyword id="KW-1185">Reference proteome</keyword>
<keyword id="KW-0812">Transmembrane</keyword>
<keyword id="KW-1133">Transmembrane helix</keyword>
<keyword id="KW-0813">Transport</keyword>
<protein>
    <recommendedName>
        <fullName>Protein spinster homolog 3</fullName>
    </recommendedName>
</protein>
<evidence type="ECO:0000250" key="1"/>
<evidence type="ECO:0000255" key="2"/>
<evidence type="ECO:0000256" key="3">
    <source>
        <dbReference type="SAM" id="MobiDB-lite"/>
    </source>
</evidence>
<evidence type="ECO:0000269" key="4">
    <source>
    </source>
</evidence>
<evidence type="ECO:0000269" key="5">
    <source>
    </source>
</evidence>
<evidence type="ECO:0000269" key="6">
    <source>
    </source>
</evidence>
<evidence type="ECO:0000303" key="7">
    <source>
    </source>
</evidence>
<evidence type="ECO:0000305" key="8"/>
<gene>
    <name type="primary">SPNS3</name>
</gene>
<comment type="function">
    <text evidence="1">Sphingolipid transporter.</text>
</comment>
<comment type="interaction">
    <interactant intactId="EBI-53898658">
        <id>Q6ZMD2</id>
    </interactant>
    <interactant intactId="EBI-2836109">
        <id>Q96S66</id>
        <label>CLCC1</label>
    </interactant>
    <organismsDiffer>false</organismsDiffer>
    <experiments>2</experiments>
</comment>
<comment type="interaction">
    <interactant intactId="EBI-17848320">
        <id>Q6ZMD2-2</id>
    </interactant>
    <interactant intactId="EBI-8648738">
        <id>Q8WVV5</id>
        <label>BTN2A2</label>
    </interactant>
    <organismsDiffer>false</organismsDiffer>
    <experiments>3</experiments>
</comment>
<comment type="interaction">
    <interactant intactId="EBI-17848320">
        <id>Q6ZMD2-2</id>
    </interactant>
    <interactant intactId="EBI-12175685">
        <id>Q14802-3</id>
        <label>FXYD3</label>
    </interactant>
    <organismsDiffer>false</organismsDiffer>
    <experiments>3</experiments>
</comment>
<comment type="interaction">
    <interactant intactId="EBI-17848320">
        <id>Q6ZMD2-2</id>
    </interactant>
    <interactant intactId="EBI-11304917">
        <id>Q8N386</id>
        <label>LRRC25</label>
    </interactant>
    <organismsDiffer>false</organismsDiffer>
    <experiments>3</experiments>
</comment>
<comment type="interaction">
    <interactant intactId="EBI-17848320">
        <id>Q6ZMD2-2</id>
    </interactant>
    <interactant intactId="EBI-12188331">
        <id>P60201-2</id>
        <label>PLP1</label>
    </interactant>
    <organismsDiffer>false</organismsDiffer>
    <experiments>3</experiments>
</comment>
<comment type="interaction">
    <interactant intactId="EBI-17848320">
        <id>Q6ZMD2-2</id>
    </interactant>
    <interactant intactId="EBI-738687">
        <id>P02808</id>
        <label>STATH</label>
    </interactant>
    <organismsDiffer>false</organismsDiffer>
    <experiments>3</experiments>
</comment>
<comment type="interaction">
    <interactant intactId="EBI-17848320">
        <id>Q6ZMD2-2</id>
    </interactant>
    <interactant intactId="EBI-12200293">
        <id>P0DN84</id>
        <label>STRIT1</label>
    </interactant>
    <organismsDiffer>false</organismsDiffer>
    <experiments>3</experiments>
</comment>
<comment type="interaction">
    <interactant intactId="EBI-17848320">
        <id>Q6ZMD2-2</id>
    </interactant>
    <interactant intactId="EBI-12187159">
        <id>O43759-2</id>
        <label>SYNGR1</label>
    </interactant>
    <organismsDiffer>false</organismsDiffer>
    <experiments>3</experiments>
</comment>
<comment type="interaction">
    <interactant intactId="EBI-17848320">
        <id>Q6ZMD2-2</id>
    </interactant>
    <interactant intactId="EBI-2852148">
        <id>Q9H2L4</id>
        <label>TMEM60</label>
    </interactant>
    <organismsDiffer>false</organismsDiffer>
    <experiments>3</experiments>
</comment>
<comment type="subcellular location">
    <subcellularLocation>
        <location evidence="8">Membrane</location>
        <topology evidence="8">Multi-pass membrane protein</topology>
    </subcellularLocation>
</comment>
<comment type="alternative products">
    <event type="alternative splicing"/>
    <isoform>
        <id>Q6ZMD2-1</id>
        <name>1</name>
        <sequence type="displayed"/>
    </isoform>
    <isoform>
        <id>Q6ZMD2-2</id>
        <name>2</name>
        <sequence type="described" ref="VSP_028197 VSP_028198"/>
    </isoform>
</comment>
<comment type="similarity">
    <text evidence="8">Belongs to the major facilitator superfamily. Spinster (TC 2.A.1.49) family.</text>
</comment>
<sequence>MAGGMSAECPEPGPGGLQGQSPGPGRQCPPPITPTSWSLPPWRAYVAAAVLCYINLLNYMNWFIIAGVLLDIQEVFQISDNHAGLLQTVFVSCLLLSAPVFGYLGDRHSRKATMSFGILLWSGAGLSSSFISPRYSWLFFLSRGIVGTGSASYSTIAPTVLGDLFVRDQRTRVLAVFYIFIPVGSGLGYVLGSAVTMLTGNWRWALRVMPCLEAVALILLILLVPDPPRGAAETQGEGAVGGFRSSWCEDVRYLGKNWSFVWSTLGVTAMAFVTGALGFWAPKFLLEARVVHGLQPPCFQEPCSNPDSLIFGALTIMTGVIGVILGAEAARRYKKVIPGAEPLICASSLLATAPCLYLALVLAPTTLLASYVFLGLGELLLSCNWAVVADILLSVVVPRCRGTAEALQITVGHILGDAGSPYLTGLISSVLRARRPDSYLQRFRSLQQSFLCCAFVIALGGGCFLLTALYLERDETRAWQPVTGTPDSNDVDSNDLERQGLLSGAGASTEEP</sequence>